<protein>
    <recommendedName>
        <fullName evidence="1">Phosphoglycerate kinase</fullName>
        <ecNumber evidence="1">2.7.2.3</ecNumber>
    </recommendedName>
</protein>
<sequence length="401" mass="44029">MSEIISIKDINFKSGSKVFVRCDFNTPMDEFYNITDDRRIRSAIPTIRYILDQGCSVILASHLGRPKNGYEEKFSLLPVAKRLSRLIDREIIFANDVVGNDAKTKVAALKQGEVLLLENIRFEKGETKDDVALAKELSEYANYYVNDAFGVCHRAHSSVHAITKFYDEEHRAAGFLLIKEIEFARNLIKRPIRPFVAVVGGSKVSGKLQALTNLLPRVDKLIIGGGMAFTFLKAIGENIGNSLLEEDLIEEATNILKKGRELGVKIYLPVDVVAAQTFSAESAIKYVSTQEIPTGWMGLDIGPASVRLFREVLSDAQTIWWNGPMGVFEMDKFSKGSIKMSHAIAESFATTVVGGGDTADVVERAGDADEMTFISTGGGASLELIEGKELPGVKVLLKAES</sequence>
<keyword id="KW-0067">ATP-binding</keyword>
<keyword id="KW-0963">Cytoplasm</keyword>
<keyword id="KW-0324">Glycolysis</keyword>
<keyword id="KW-0418">Kinase</keyword>
<keyword id="KW-0547">Nucleotide-binding</keyword>
<keyword id="KW-0808">Transferase</keyword>
<name>PGK_CAMFF</name>
<feature type="chain" id="PRO_1000203323" description="Phosphoglycerate kinase">
    <location>
        <begin position="1"/>
        <end position="401"/>
    </location>
</feature>
<feature type="binding site" evidence="1">
    <location>
        <begin position="23"/>
        <end position="25"/>
    </location>
    <ligand>
        <name>substrate</name>
    </ligand>
</feature>
<feature type="binding site" evidence="1">
    <location>
        <position position="39"/>
    </location>
    <ligand>
        <name>substrate</name>
    </ligand>
</feature>
<feature type="binding site" evidence="1">
    <location>
        <begin position="62"/>
        <end position="65"/>
    </location>
    <ligand>
        <name>substrate</name>
    </ligand>
</feature>
<feature type="binding site" evidence="1">
    <location>
        <position position="121"/>
    </location>
    <ligand>
        <name>substrate</name>
    </ligand>
</feature>
<feature type="binding site" evidence="1">
    <location>
        <position position="154"/>
    </location>
    <ligand>
        <name>substrate</name>
    </ligand>
</feature>
<feature type="binding site" evidence="1">
    <location>
        <position position="207"/>
    </location>
    <ligand>
        <name>ATP</name>
        <dbReference type="ChEBI" id="CHEBI:30616"/>
    </ligand>
</feature>
<feature type="binding site" evidence="1">
    <location>
        <position position="298"/>
    </location>
    <ligand>
        <name>ATP</name>
        <dbReference type="ChEBI" id="CHEBI:30616"/>
    </ligand>
</feature>
<feature type="binding site" evidence="1">
    <location>
        <position position="329"/>
    </location>
    <ligand>
        <name>ATP</name>
        <dbReference type="ChEBI" id="CHEBI:30616"/>
    </ligand>
</feature>
<feature type="binding site" evidence="1">
    <location>
        <begin position="355"/>
        <end position="358"/>
    </location>
    <ligand>
        <name>ATP</name>
        <dbReference type="ChEBI" id="CHEBI:30616"/>
    </ligand>
</feature>
<accession>A0RQT4</accession>
<proteinExistence type="inferred from homology"/>
<comment type="catalytic activity">
    <reaction evidence="1">
        <text>(2R)-3-phosphoglycerate + ATP = (2R)-3-phospho-glyceroyl phosphate + ADP</text>
        <dbReference type="Rhea" id="RHEA:14801"/>
        <dbReference type="ChEBI" id="CHEBI:30616"/>
        <dbReference type="ChEBI" id="CHEBI:57604"/>
        <dbReference type="ChEBI" id="CHEBI:58272"/>
        <dbReference type="ChEBI" id="CHEBI:456216"/>
        <dbReference type="EC" id="2.7.2.3"/>
    </reaction>
</comment>
<comment type="pathway">
    <text evidence="1">Carbohydrate degradation; glycolysis; pyruvate from D-glyceraldehyde 3-phosphate: step 2/5.</text>
</comment>
<comment type="subunit">
    <text evidence="1">Monomer.</text>
</comment>
<comment type="subcellular location">
    <subcellularLocation>
        <location evidence="1">Cytoplasm</location>
    </subcellularLocation>
</comment>
<comment type="similarity">
    <text evidence="1">Belongs to the phosphoglycerate kinase family.</text>
</comment>
<gene>
    <name evidence="1" type="primary">pgk</name>
    <name type="ordered locus">CFF8240_1428</name>
</gene>
<evidence type="ECO:0000255" key="1">
    <source>
        <dbReference type="HAMAP-Rule" id="MF_00145"/>
    </source>
</evidence>
<organism>
    <name type="scientific">Campylobacter fetus subsp. fetus (strain 82-40)</name>
    <dbReference type="NCBI Taxonomy" id="360106"/>
    <lineage>
        <taxon>Bacteria</taxon>
        <taxon>Pseudomonadati</taxon>
        <taxon>Campylobacterota</taxon>
        <taxon>Epsilonproteobacteria</taxon>
        <taxon>Campylobacterales</taxon>
        <taxon>Campylobacteraceae</taxon>
        <taxon>Campylobacter</taxon>
    </lineage>
</organism>
<dbReference type="EC" id="2.7.2.3" evidence="1"/>
<dbReference type="EMBL" id="CP000487">
    <property type="protein sequence ID" value="ABK82903.1"/>
    <property type="molecule type" value="Genomic_DNA"/>
</dbReference>
<dbReference type="RefSeq" id="WP_011732202.1">
    <property type="nucleotide sequence ID" value="NC_008599.1"/>
</dbReference>
<dbReference type="SMR" id="A0RQT4"/>
<dbReference type="KEGG" id="cff:CFF8240_1428"/>
<dbReference type="eggNOG" id="COG0126">
    <property type="taxonomic scope" value="Bacteria"/>
</dbReference>
<dbReference type="HOGENOM" id="CLU_025427_0_2_7"/>
<dbReference type="UniPathway" id="UPA00109">
    <property type="reaction ID" value="UER00185"/>
</dbReference>
<dbReference type="Proteomes" id="UP000000760">
    <property type="component" value="Chromosome"/>
</dbReference>
<dbReference type="GO" id="GO:0005829">
    <property type="term" value="C:cytosol"/>
    <property type="evidence" value="ECO:0007669"/>
    <property type="project" value="TreeGrafter"/>
</dbReference>
<dbReference type="GO" id="GO:0043531">
    <property type="term" value="F:ADP binding"/>
    <property type="evidence" value="ECO:0007669"/>
    <property type="project" value="TreeGrafter"/>
</dbReference>
<dbReference type="GO" id="GO:0005524">
    <property type="term" value="F:ATP binding"/>
    <property type="evidence" value="ECO:0007669"/>
    <property type="project" value="UniProtKB-KW"/>
</dbReference>
<dbReference type="GO" id="GO:0004618">
    <property type="term" value="F:phosphoglycerate kinase activity"/>
    <property type="evidence" value="ECO:0007669"/>
    <property type="project" value="UniProtKB-UniRule"/>
</dbReference>
<dbReference type="GO" id="GO:0006094">
    <property type="term" value="P:gluconeogenesis"/>
    <property type="evidence" value="ECO:0007669"/>
    <property type="project" value="TreeGrafter"/>
</dbReference>
<dbReference type="GO" id="GO:0006096">
    <property type="term" value="P:glycolytic process"/>
    <property type="evidence" value="ECO:0007669"/>
    <property type="project" value="UniProtKB-UniRule"/>
</dbReference>
<dbReference type="CDD" id="cd00318">
    <property type="entry name" value="Phosphoglycerate_kinase"/>
    <property type="match status" value="1"/>
</dbReference>
<dbReference type="FunFam" id="3.40.50.1260:FF:000006">
    <property type="entry name" value="Phosphoglycerate kinase"/>
    <property type="match status" value="1"/>
</dbReference>
<dbReference type="FunFam" id="3.40.50.1260:FF:000007">
    <property type="entry name" value="Phosphoglycerate kinase"/>
    <property type="match status" value="1"/>
</dbReference>
<dbReference type="Gene3D" id="3.40.50.1260">
    <property type="entry name" value="Phosphoglycerate kinase, N-terminal domain"/>
    <property type="match status" value="2"/>
</dbReference>
<dbReference type="HAMAP" id="MF_00145">
    <property type="entry name" value="Phosphoglyc_kinase"/>
    <property type="match status" value="1"/>
</dbReference>
<dbReference type="InterPro" id="IPR001576">
    <property type="entry name" value="Phosphoglycerate_kinase"/>
</dbReference>
<dbReference type="InterPro" id="IPR015824">
    <property type="entry name" value="Phosphoglycerate_kinase_N"/>
</dbReference>
<dbReference type="InterPro" id="IPR036043">
    <property type="entry name" value="Phosphoglycerate_kinase_sf"/>
</dbReference>
<dbReference type="PANTHER" id="PTHR11406">
    <property type="entry name" value="PHOSPHOGLYCERATE KINASE"/>
    <property type="match status" value="1"/>
</dbReference>
<dbReference type="PANTHER" id="PTHR11406:SF23">
    <property type="entry name" value="PHOSPHOGLYCERATE KINASE 1, CHLOROPLASTIC-RELATED"/>
    <property type="match status" value="1"/>
</dbReference>
<dbReference type="Pfam" id="PF00162">
    <property type="entry name" value="PGK"/>
    <property type="match status" value="1"/>
</dbReference>
<dbReference type="PIRSF" id="PIRSF000724">
    <property type="entry name" value="Pgk"/>
    <property type="match status" value="1"/>
</dbReference>
<dbReference type="PRINTS" id="PR00477">
    <property type="entry name" value="PHGLYCKINASE"/>
</dbReference>
<dbReference type="SUPFAM" id="SSF53748">
    <property type="entry name" value="Phosphoglycerate kinase"/>
    <property type="match status" value="1"/>
</dbReference>
<reference key="1">
    <citation type="submission" date="2006-11" db="EMBL/GenBank/DDBJ databases">
        <title>Sequence of Campylobacter fetus subsp. fetus 82-40.</title>
        <authorList>
            <person name="Fouts D.E."/>
            <person name="Nelson K.E."/>
        </authorList>
    </citation>
    <scope>NUCLEOTIDE SEQUENCE [LARGE SCALE GENOMIC DNA]</scope>
    <source>
        <strain>82-40</strain>
    </source>
</reference>